<organism>
    <name type="scientific">Rattus norvegicus</name>
    <name type="common">Rat</name>
    <dbReference type="NCBI Taxonomy" id="10116"/>
    <lineage>
        <taxon>Eukaryota</taxon>
        <taxon>Metazoa</taxon>
        <taxon>Chordata</taxon>
        <taxon>Craniata</taxon>
        <taxon>Vertebrata</taxon>
        <taxon>Euteleostomi</taxon>
        <taxon>Mammalia</taxon>
        <taxon>Eutheria</taxon>
        <taxon>Euarchontoglires</taxon>
        <taxon>Glires</taxon>
        <taxon>Rodentia</taxon>
        <taxon>Myomorpha</taxon>
        <taxon>Muroidea</taxon>
        <taxon>Muridae</taxon>
        <taxon>Murinae</taxon>
        <taxon>Rattus</taxon>
    </lineage>
</organism>
<proteinExistence type="evidence at protein level"/>
<accession>P50753</accession>
<feature type="initiator methionine" description="Removed" evidence="2">
    <location>
        <position position="1"/>
    </location>
</feature>
<feature type="chain" id="PRO_0000186176" description="Troponin T, cardiac muscle">
    <location>
        <begin position="2"/>
        <end position="299"/>
    </location>
</feature>
<feature type="region of interest" description="Disordered" evidence="5">
    <location>
        <begin position="1"/>
        <end position="97"/>
    </location>
</feature>
<feature type="region of interest" description="Disordered" evidence="5">
    <location>
        <begin position="137"/>
        <end position="220"/>
    </location>
</feature>
<feature type="compositionally biased region" description="Acidic residues" evidence="5">
    <location>
        <begin position="1"/>
        <end position="71"/>
    </location>
</feature>
<feature type="compositionally biased region" description="Basic and acidic residues" evidence="5">
    <location>
        <begin position="137"/>
        <end position="185"/>
    </location>
</feature>
<feature type="compositionally biased region" description="Basic and acidic residues" evidence="5">
    <location>
        <begin position="204"/>
        <end position="220"/>
    </location>
</feature>
<feature type="modified residue" description="N-acetylserine" evidence="2">
    <location>
        <position position="2"/>
    </location>
</feature>
<feature type="modified residue" description="Phosphoserine" evidence="8">
    <location>
        <position position="2"/>
    </location>
</feature>
<feature type="modified residue" description="Phosphothreonine; by PKC/PRKCA" evidence="3">
    <location>
        <position position="205"/>
    </location>
</feature>
<feature type="modified residue" description="Phosphoserine; by PKC/PRKCA" evidence="4">
    <location>
        <position position="209"/>
    </location>
</feature>
<feature type="modified residue" description="Phosphothreonine; by PKC/PRKCA and RAF1" evidence="7">
    <location>
        <position position="214"/>
    </location>
</feature>
<feature type="modified residue" description="Phosphothreonine; by PKC/PRKCA" evidence="3">
    <location>
        <position position="295"/>
    </location>
</feature>
<feature type="splice variant" id="VSP_006657" description="In isoform 2." evidence="6">
    <location>
        <begin position="18"/>
        <end position="27"/>
    </location>
</feature>
<feature type="sequence conflict" description="In Ref. 2; AAB07676." evidence="6" ref="2">
    <original>T</original>
    <variation>A</variation>
    <location>
        <position position="205"/>
    </location>
</feature>
<feature type="modified residue" description="Phosphoserine" evidence="8">
    <location sequence="P50753-2">
        <position position="2"/>
    </location>
</feature>
<name>TNNT2_RAT</name>
<evidence type="ECO:0000250" key="1"/>
<evidence type="ECO:0000250" key="2">
    <source>
        <dbReference type="UniProtKB" id="P09741"/>
    </source>
</evidence>
<evidence type="ECO:0000250" key="3">
    <source>
        <dbReference type="UniProtKB" id="P13789"/>
    </source>
</evidence>
<evidence type="ECO:0000250" key="4">
    <source>
        <dbReference type="UniProtKB" id="P50752"/>
    </source>
</evidence>
<evidence type="ECO:0000256" key="5">
    <source>
        <dbReference type="SAM" id="MobiDB-lite"/>
    </source>
</evidence>
<evidence type="ECO:0000305" key="6"/>
<evidence type="ECO:0000305" key="7">
    <source>
    </source>
</evidence>
<evidence type="ECO:0007744" key="8">
    <source>
    </source>
</evidence>
<protein>
    <recommendedName>
        <fullName>Troponin T, cardiac muscle</fullName>
        <shortName>TnTc</shortName>
    </recommendedName>
    <alternativeName>
        <fullName>Cardiac muscle troponin T</fullName>
        <shortName>cTnT</shortName>
    </alternativeName>
</protein>
<reference key="1">
    <citation type="journal article" date="1989" name="J. Biol. Chem.">
        <title>Isolation and characterization of cDNA clones encoding embryonic and adult isoforms of rat cardiac troponin T.</title>
        <authorList>
            <person name="Jin J.-P."/>
            <person name="Lin J.C."/>
        </authorList>
    </citation>
    <scope>NUCLEOTIDE SEQUENCE [MRNA]</scope>
</reference>
<reference key="2">
    <citation type="journal article" date="1992" name="J. Mol. Biol.">
        <title>Complete nucleotide sequence and structural organization of rat cardiac troponin T gene. A single gene generates embryonic and adult isoforms via developmentally regulated alternative splicing.</title>
        <authorList>
            <person name="Jin J.-P."/>
            <person name="Huang Q.-Q."/>
            <person name="Yeh H.-I."/>
            <person name="Lin J.J.-C."/>
        </authorList>
    </citation>
    <scope>NUCLEOTIDE SEQUENCE [GENOMIC DNA]</scope>
</reference>
<reference key="3">
    <citation type="journal article" date="2009" name="J. Muscle Res. Cell Motil.">
        <title>Raf-1: a novel cardiac troponin T kinase.</title>
        <authorList>
            <person name="Pfleiderer P."/>
            <person name="Sumandea M.P."/>
            <person name="Rybin V.O."/>
            <person name="Wang C."/>
            <person name="Steinberg S.F."/>
        </authorList>
    </citation>
    <scope>PHOSPHORYLATION AT THR-214 BY RAF1</scope>
</reference>
<reference key="4">
    <citation type="journal article" date="2012" name="Nat. Commun.">
        <title>Quantitative maps of protein phosphorylation sites across 14 different rat organs and tissues.</title>
        <authorList>
            <person name="Lundby A."/>
            <person name="Secher A."/>
            <person name="Lage K."/>
            <person name="Nordsborg N.B."/>
            <person name="Dmytriyev A."/>
            <person name="Lundby C."/>
            <person name="Olsen J.V."/>
        </authorList>
    </citation>
    <scope>PHOSPHORYLATION [LARGE SCALE ANALYSIS] AT SER-2</scope>
    <scope>PHOSPHORYLATION [LARGE SCALE ANALYSIS] AT SER-2 (ISOFORM 2)</scope>
    <scope>IDENTIFICATION BY MASS SPECTROMETRY [LARGE SCALE ANALYSIS]</scope>
</reference>
<dbReference type="EMBL" id="M26051">
    <property type="protein sequence ID" value="AAA42296.1"/>
    <property type="molecule type" value="mRNA"/>
</dbReference>
<dbReference type="EMBL" id="M26052">
    <property type="protein sequence ID" value="AAA42297.1"/>
    <property type="molecule type" value="mRNA"/>
</dbReference>
<dbReference type="EMBL" id="M80829">
    <property type="protein sequence ID" value="AAB07676.1"/>
    <property type="molecule type" value="Genomic_DNA"/>
</dbReference>
<dbReference type="PIR" id="A44781">
    <property type="entry name" value="A44781"/>
</dbReference>
<dbReference type="PIR" id="B44781">
    <property type="entry name" value="B44781"/>
</dbReference>
<dbReference type="PIR" id="S30443">
    <property type="entry name" value="S30443"/>
</dbReference>
<dbReference type="RefSeq" id="NP_001402692.1">
    <molecule id="P50753-2"/>
    <property type="nucleotide sequence ID" value="NM_001415763.1"/>
</dbReference>
<dbReference type="RefSeq" id="NP_036808.1">
    <molecule id="P50753-1"/>
    <property type="nucleotide sequence ID" value="NM_012676.2"/>
</dbReference>
<dbReference type="RefSeq" id="XP_006249900.1">
    <property type="nucleotide sequence ID" value="XM_006249838.2"/>
</dbReference>
<dbReference type="RefSeq" id="XP_008767759.1">
    <property type="nucleotide sequence ID" value="XM_008769537.2"/>
</dbReference>
<dbReference type="RefSeq" id="XP_017454159.1">
    <property type="nucleotide sequence ID" value="XM_017598670.1"/>
</dbReference>
<dbReference type="SMR" id="P50753"/>
<dbReference type="BioGRID" id="246955">
    <property type="interactions" value="3"/>
</dbReference>
<dbReference type="FunCoup" id="P50753">
    <property type="interactions" value="57"/>
</dbReference>
<dbReference type="STRING" id="10116.ENSRNOP00000069434"/>
<dbReference type="GlyGen" id="P50753">
    <property type="glycosylation" value="1 site, 1 O-linked glycan (1 site)"/>
</dbReference>
<dbReference type="iPTMnet" id="P50753"/>
<dbReference type="PhosphoSitePlus" id="P50753"/>
<dbReference type="PaxDb" id="10116-ENSRNOP00000049297"/>
<dbReference type="GeneID" id="24837"/>
<dbReference type="KEGG" id="rno:24837"/>
<dbReference type="UCSC" id="RGD:3882">
    <molecule id="P50753-1"/>
    <property type="organism name" value="rat"/>
</dbReference>
<dbReference type="AGR" id="RGD:3882"/>
<dbReference type="CTD" id="7139"/>
<dbReference type="RGD" id="3882">
    <property type="gene designation" value="Tnnt2"/>
</dbReference>
<dbReference type="VEuPathDB" id="HostDB:ENSRNOG00000033734"/>
<dbReference type="eggNOG" id="KOG3634">
    <property type="taxonomic scope" value="Eukaryota"/>
</dbReference>
<dbReference type="InParanoid" id="P50753"/>
<dbReference type="OrthoDB" id="330499at2759"/>
<dbReference type="Reactome" id="R-RNO-390522">
    <property type="pathway name" value="Striated Muscle Contraction"/>
</dbReference>
<dbReference type="PRO" id="PR:P50753"/>
<dbReference type="Proteomes" id="UP000002494">
    <property type="component" value="Chromosome 13"/>
</dbReference>
<dbReference type="Bgee" id="ENSRNOG00000033734">
    <property type="expression patterns" value="Expressed in heart and 19 other cell types or tissues"/>
</dbReference>
<dbReference type="ExpressionAtlas" id="P50753">
    <property type="expression patterns" value="baseline and differential"/>
</dbReference>
<dbReference type="GO" id="GO:0097512">
    <property type="term" value="C:cardiac myofibril"/>
    <property type="evidence" value="ECO:0000266"/>
    <property type="project" value="RGD"/>
</dbReference>
<dbReference type="GO" id="GO:1990584">
    <property type="term" value="C:cardiac Troponin complex"/>
    <property type="evidence" value="ECO:0000266"/>
    <property type="project" value="RGD"/>
</dbReference>
<dbReference type="GO" id="GO:0030016">
    <property type="term" value="C:myofibril"/>
    <property type="evidence" value="ECO:0000314"/>
    <property type="project" value="RGD"/>
</dbReference>
<dbReference type="GO" id="GO:0030017">
    <property type="term" value="C:sarcomere"/>
    <property type="evidence" value="ECO:0000266"/>
    <property type="project" value="RGD"/>
</dbReference>
<dbReference type="GO" id="GO:0016528">
    <property type="term" value="C:sarcoplasm"/>
    <property type="evidence" value="ECO:0000266"/>
    <property type="project" value="RGD"/>
</dbReference>
<dbReference type="GO" id="GO:0005865">
    <property type="term" value="C:striated muscle thin filament"/>
    <property type="evidence" value="ECO:0000250"/>
    <property type="project" value="UniProtKB"/>
</dbReference>
<dbReference type="GO" id="GO:0005861">
    <property type="term" value="C:troponin complex"/>
    <property type="evidence" value="ECO:0000314"/>
    <property type="project" value="RGD"/>
</dbReference>
<dbReference type="GO" id="GO:0003779">
    <property type="term" value="F:actin binding"/>
    <property type="evidence" value="ECO:0000250"/>
    <property type="project" value="UniProtKB"/>
</dbReference>
<dbReference type="GO" id="GO:0044877">
    <property type="term" value="F:protein-containing complex binding"/>
    <property type="evidence" value="ECO:0000353"/>
    <property type="project" value="RGD"/>
</dbReference>
<dbReference type="GO" id="GO:0030674">
    <property type="term" value="F:protein-macromolecule adaptor activity"/>
    <property type="evidence" value="ECO:0000314"/>
    <property type="project" value="RGD"/>
</dbReference>
<dbReference type="GO" id="GO:0005200">
    <property type="term" value="F:structural constituent of cytoskeleton"/>
    <property type="evidence" value="ECO:0000266"/>
    <property type="project" value="RGD"/>
</dbReference>
<dbReference type="GO" id="GO:0005523">
    <property type="term" value="F:tropomyosin binding"/>
    <property type="evidence" value="ECO:0000250"/>
    <property type="project" value="UniProtKB"/>
</dbReference>
<dbReference type="GO" id="GO:0030172">
    <property type="term" value="F:troponin C binding"/>
    <property type="evidence" value="ECO:0000250"/>
    <property type="project" value="UniProtKB"/>
</dbReference>
<dbReference type="GO" id="GO:0031013">
    <property type="term" value="F:troponin I binding"/>
    <property type="evidence" value="ECO:0000353"/>
    <property type="project" value="RGD"/>
</dbReference>
<dbReference type="GO" id="GO:0051764">
    <property type="term" value="P:actin crosslink formation"/>
    <property type="evidence" value="ECO:0000314"/>
    <property type="project" value="RGD"/>
</dbReference>
<dbReference type="GO" id="GO:0055009">
    <property type="term" value="P:atrial cardiac muscle tissue morphogenesis"/>
    <property type="evidence" value="ECO:0000266"/>
    <property type="project" value="RGD"/>
</dbReference>
<dbReference type="GO" id="GO:0060048">
    <property type="term" value="P:cardiac muscle contraction"/>
    <property type="evidence" value="ECO:0000314"/>
    <property type="project" value="RGD"/>
</dbReference>
<dbReference type="GO" id="GO:0007507">
    <property type="term" value="P:heart development"/>
    <property type="evidence" value="ECO:0000266"/>
    <property type="project" value="RGD"/>
</dbReference>
<dbReference type="GO" id="GO:0006936">
    <property type="term" value="P:muscle contraction"/>
    <property type="evidence" value="ECO:0000315"/>
    <property type="project" value="RGD"/>
</dbReference>
<dbReference type="GO" id="GO:0030049">
    <property type="term" value="P:muscle filament sliding"/>
    <property type="evidence" value="ECO:0000250"/>
    <property type="project" value="UniProtKB"/>
</dbReference>
<dbReference type="GO" id="GO:0032780">
    <property type="term" value="P:negative regulation of ATP-dependent activity"/>
    <property type="evidence" value="ECO:0000250"/>
    <property type="project" value="UniProtKB"/>
</dbReference>
<dbReference type="GO" id="GO:0032781">
    <property type="term" value="P:positive regulation of ATP-dependent activity"/>
    <property type="evidence" value="ECO:0000250"/>
    <property type="project" value="UniProtKB"/>
</dbReference>
<dbReference type="GO" id="GO:0008016">
    <property type="term" value="P:regulation of heart contraction"/>
    <property type="evidence" value="ECO:0000250"/>
    <property type="project" value="UniProtKB"/>
</dbReference>
<dbReference type="GO" id="GO:0032972">
    <property type="term" value="P:regulation of muscle filament sliding speed"/>
    <property type="evidence" value="ECO:0000315"/>
    <property type="project" value="BHF-UCL"/>
</dbReference>
<dbReference type="GO" id="GO:0009617">
    <property type="term" value="P:response to bacterium"/>
    <property type="evidence" value="ECO:0000266"/>
    <property type="project" value="RGD"/>
</dbReference>
<dbReference type="GO" id="GO:0051592">
    <property type="term" value="P:response to calcium ion"/>
    <property type="evidence" value="ECO:0000250"/>
    <property type="project" value="UniProtKB"/>
</dbReference>
<dbReference type="GO" id="GO:0045214">
    <property type="term" value="P:sarcomere organization"/>
    <property type="evidence" value="ECO:0000266"/>
    <property type="project" value="RGD"/>
</dbReference>
<dbReference type="GO" id="GO:0048771">
    <property type="term" value="P:tissue remodeling"/>
    <property type="evidence" value="ECO:0000270"/>
    <property type="project" value="RGD"/>
</dbReference>
<dbReference type="GO" id="GO:0055010">
    <property type="term" value="P:ventricular cardiac muscle tissue morphogenesis"/>
    <property type="evidence" value="ECO:0000250"/>
    <property type="project" value="UniProtKB"/>
</dbReference>
<dbReference type="FunFam" id="1.20.5.350:FF:000001">
    <property type="entry name" value="Troponin T, fast skeletal muscle"/>
    <property type="match status" value="1"/>
</dbReference>
<dbReference type="Gene3D" id="1.20.5.350">
    <property type="match status" value="1"/>
</dbReference>
<dbReference type="InterPro" id="IPR027707">
    <property type="entry name" value="TNNT"/>
</dbReference>
<dbReference type="InterPro" id="IPR001978">
    <property type="entry name" value="Troponin"/>
</dbReference>
<dbReference type="InterPro" id="IPR038077">
    <property type="entry name" value="Troponin_sf"/>
</dbReference>
<dbReference type="PANTHER" id="PTHR11521">
    <property type="entry name" value="TROPONIN T"/>
    <property type="match status" value="1"/>
</dbReference>
<dbReference type="PANTHER" id="PTHR11521:SF5">
    <property type="entry name" value="TROPONIN T, CARDIAC MUSCLE"/>
    <property type="match status" value="1"/>
</dbReference>
<dbReference type="Pfam" id="PF00992">
    <property type="entry name" value="Troponin"/>
    <property type="match status" value="2"/>
</dbReference>
<dbReference type="SUPFAM" id="SSF90250">
    <property type="entry name" value="Troponin coil-coiled subunits"/>
    <property type="match status" value="1"/>
</dbReference>
<sequence>MSDAEEEVVEYEEEQEEEDWSEEEEDEQEEAVEEEDGEAEPDPEGEAEAEEDKAEEVGPDEEARDAEDGPVEDSKPKPSRLFMPNLVPPKIPDGERVDFDDIHRKRMEKDLNELQTLIEAHFENRKKEEEELISLKDRIEKRRAERAEQQRIRNEREKERQNRLAEERARREEEENRRKAEDEARKKKALSNMMHFGGYIQKAQTERKSGKRQTEREKKKKILAERRKVLAIDHLNEDQLREKAKELWQSIHNLEAEKFDLQEKFKQQKYEINVLRNRINDNQKVSKTRGKAKVTGRWK</sequence>
<comment type="function">
    <text>Troponin T is the tropomyosin-binding subunit of troponin, the thin filament regulatory complex which confers calcium-sensitivity to striated muscle actomyosin ATPase activity.</text>
</comment>
<comment type="alternative products">
    <event type="alternative splicing"/>
    <isoform>
        <id>P50753-1</id>
        <name>1</name>
        <name>Embryonic</name>
        <sequence type="displayed"/>
    </isoform>
    <isoform>
        <id>P50753-2</id>
        <name>2</name>
        <name>Adult</name>
        <sequence type="described" ref="VSP_006657"/>
    </isoform>
</comment>
<comment type="PTM">
    <text evidence="1">Phosphorylation at Thr-214 by PRKCA induces significant reduction in myofilament calcium sensitivity and actomyosin ATPase activity.</text>
</comment>
<comment type="similarity">
    <text evidence="6">Belongs to the troponin T family.</text>
</comment>
<keyword id="KW-0007">Acetylation</keyword>
<keyword id="KW-0025">Alternative splicing</keyword>
<keyword id="KW-0514">Muscle protein</keyword>
<keyword id="KW-0597">Phosphoprotein</keyword>
<keyword id="KW-1185">Reference proteome</keyword>
<gene>
    <name type="primary">Tnnt2</name>
</gene>